<dbReference type="EMBL" id="CP001010">
    <property type="protein sequence ID" value="ACB44409.1"/>
    <property type="molecule type" value="Genomic_DNA"/>
</dbReference>
<dbReference type="SMR" id="B1XVN2"/>
<dbReference type="STRING" id="452638.Pnec_1284"/>
<dbReference type="KEGG" id="pne:Pnec_1284"/>
<dbReference type="eggNOG" id="COG0806">
    <property type="taxonomic scope" value="Bacteria"/>
</dbReference>
<dbReference type="HOGENOM" id="CLU_077636_1_0_4"/>
<dbReference type="OrthoDB" id="9783509at2"/>
<dbReference type="GO" id="GO:0005737">
    <property type="term" value="C:cytoplasm"/>
    <property type="evidence" value="ECO:0007669"/>
    <property type="project" value="UniProtKB-SubCell"/>
</dbReference>
<dbReference type="GO" id="GO:0005840">
    <property type="term" value="C:ribosome"/>
    <property type="evidence" value="ECO:0007669"/>
    <property type="project" value="InterPro"/>
</dbReference>
<dbReference type="GO" id="GO:0043022">
    <property type="term" value="F:ribosome binding"/>
    <property type="evidence" value="ECO:0007669"/>
    <property type="project" value="InterPro"/>
</dbReference>
<dbReference type="GO" id="GO:0042274">
    <property type="term" value="P:ribosomal small subunit biogenesis"/>
    <property type="evidence" value="ECO:0007669"/>
    <property type="project" value="UniProtKB-UniRule"/>
</dbReference>
<dbReference type="GO" id="GO:0006364">
    <property type="term" value="P:rRNA processing"/>
    <property type="evidence" value="ECO:0007669"/>
    <property type="project" value="UniProtKB-UniRule"/>
</dbReference>
<dbReference type="Gene3D" id="2.30.30.240">
    <property type="entry name" value="PRC-barrel domain"/>
    <property type="match status" value="1"/>
</dbReference>
<dbReference type="Gene3D" id="2.40.30.60">
    <property type="entry name" value="RimM"/>
    <property type="match status" value="1"/>
</dbReference>
<dbReference type="HAMAP" id="MF_00014">
    <property type="entry name" value="Ribosome_mat_RimM"/>
    <property type="match status" value="1"/>
</dbReference>
<dbReference type="InterPro" id="IPR011033">
    <property type="entry name" value="PRC_barrel-like_sf"/>
</dbReference>
<dbReference type="InterPro" id="IPR056792">
    <property type="entry name" value="PRC_RimM"/>
</dbReference>
<dbReference type="InterPro" id="IPR011961">
    <property type="entry name" value="RimM"/>
</dbReference>
<dbReference type="InterPro" id="IPR002676">
    <property type="entry name" value="RimM_N"/>
</dbReference>
<dbReference type="InterPro" id="IPR036976">
    <property type="entry name" value="RimM_N_sf"/>
</dbReference>
<dbReference type="InterPro" id="IPR009000">
    <property type="entry name" value="Transl_B-barrel_sf"/>
</dbReference>
<dbReference type="NCBIfam" id="TIGR02273">
    <property type="entry name" value="16S_RimM"/>
    <property type="match status" value="1"/>
</dbReference>
<dbReference type="PANTHER" id="PTHR33692">
    <property type="entry name" value="RIBOSOME MATURATION FACTOR RIMM"/>
    <property type="match status" value="1"/>
</dbReference>
<dbReference type="PANTHER" id="PTHR33692:SF1">
    <property type="entry name" value="RIBOSOME MATURATION FACTOR RIMM"/>
    <property type="match status" value="1"/>
</dbReference>
<dbReference type="Pfam" id="PF24986">
    <property type="entry name" value="PRC_RimM"/>
    <property type="match status" value="1"/>
</dbReference>
<dbReference type="Pfam" id="PF01782">
    <property type="entry name" value="RimM"/>
    <property type="match status" value="1"/>
</dbReference>
<dbReference type="SUPFAM" id="SSF50346">
    <property type="entry name" value="PRC-barrel domain"/>
    <property type="match status" value="1"/>
</dbReference>
<dbReference type="SUPFAM" id="SSF50447">
    <property type="entry name" value="Translation proteins"/>
    <property type="match status" value="1"/>
</dbReference>
<protein>
    <recommendedName>
        <fullName evidence="1">Ribosome maturation factor RimM</fullName>
    </recommendedName>
</protein>
<name>RIMM_POLNS</name>
<reference key="1">
    <citation type="journal article" date="2013" name="Proc. Natl. Acad. Sci. U.S.A.">
        <title>Polynucleobacter necessarius, a model for genome reduction in both free-living and symbiotic bacteria.</title>
        <authorList>
            <person name="Boscaro V."/>
            <person name="Felletti M."/>
            <person name="Vannini C."/>
            <person name="Ackerman M.S."/>
            <person name="Chain P.S."/>
            <person name="Malfatti S."/>
            <person name="Vergez L.M."/>
            <person name="Shin M."/>
            <person name="Doak T.G."/>
            <person name="Lynch M."/>
            <person name="Petroni G."/>
        </authorList>
    </citation>
    <scope>NUCLEOTIDE SEQUENCE [LARGE SCALE GENOMIC DNA]</scope>
    <source>
        <strain>STIR1</strain>
    </source>
</reference>
<accession>B1XVN2</accession>
<feature type="chain" id="PRO_0000351786" description="Ribosome maturation factor RimM">
    <location>
        <begin position="1"/>
        <end position="184"/>
    </location>
</feature>
<feature type="domain" description="PRC barrel" evidence="1">
    <location>
        <begin position="112"/>
        <end position="184"/>
    </location>
</feature>
<organism>
    <name type="scientific">Polynucleobacter necessarius subsp. necessarius (strain STIR1)</name>
    <dbReference type="NCBI Taxonomy" id="452638"/>
    <lineage>
        <taxon>Bacteria</taxon>
        <taxon>Pseudomonadati</taxon>
        <taxon>Pseudomonadota</taxon>
        <taxon>Betaproteobacteria</taxon>
        <taxon>Burkholderiales</taxon>
        <taxon>Burkholderiaceae</taxon>
        <taxon>Polynucleobacter</taxon>
    </lineage>
</organism>
<keyword id="KW-0143">Chaperone</keyword>
<keyword id="KW-0963">Cytoplasm</keyword>
<keyword id="KW-0690">Ribosome biogenesis</keyword>
<keyword id="KW-0698">rRNA processing</keyword>
<proteinExistence type="inferred from homology"/>
<evidence type="ECO:0000255" key="1">
    <source>
        <dbReference type="HAMAP-Rule" id="MF_00014"/>
    </source>
</evidence>
<gene>
    <name evidence="1" type="primary">rimM</name>
    <name type="ordered locus">Pnec_1284</name>
</gene>
<comment type="function">
    <text evidence="1">An accessory protein needed during the final step in the assembly of 30S ribosomal subunit, possibly for assembly of the head region. Essential for efficient processing of 16S rRNA. May be needed both before and after RbfA during the maturation of 16S rRNA. It has affinity for free ribosomal 30S subunits but not for 70S ribosomes.</text>
</comment>
<comment type="subunit">
    <text evidence="1">Binds ribosomal protein uS19.</text>
</comment>
<comment type="subcellular location">
    <subcellularLocation>
        <location evidence="1">Cytoplasm</location>
    </subcellularLocation>
</comment>
<comment type="domain">
    <text evidence="1">The PRC barrel domain binds ribosomal protein uS19.</text>
</comment>
<comment type="similarity">
    <text evidence="1">Belongs to the RimM family.</text>
</comment>
<sequence>MSAPSLNDLIELGAISEAQGLRGQVKIRPHSSEPVALLSSKSVWLSLIPRRDAGLSSPVEQASLTQYKVKSAKMHSGNVVIALEGVTDRDQALALKGARILVARDAFPKVETDSYYWIDLIGCNAINLQNETLGEVIDVTENGAHGVIAIGDASTKTIQYLVPFVKQVVQDVDLSNKTISLDWQ</sequence>